<proteinExistence type="inferred from homology"/>
<reference key="1">
    <citation type="journal article" date="2010" name="Genome Biol. Evol.">
        <title>Continuing evolution of Burkholderia mallei through genome reduction and large-scale rearrangements.</title>
        <authorList>
            <person name="Losada L."/>
            <person name="Ronning C.M."/>
            <person name="DeShazer D."/>
            <person name="Woods D."/>
            <person name="Fedorova N."/>
            <person name="Kim H.S."/>
            <person name="Shabalina S.A."/>
            <person name="Pearson T.R."/>
            <person name="Brinkac L."/>
            <person name="Tan P."/>
            <person name="Nandi T."/>
            <person name="Crabtree J."/>
            <person name="Badger J."/>
            <person name="Beckstrom-Sternberg S."/>
            <person name="Saqib M."/>
            <person name="Schutzer S.E."/>
            <person name="Keim P."/>
            <person name="Nierman W.C."/>
        </authorList>
    </citation>
    <scope>NUCLEOTIDE SEQUENCE [LARGE SCALE GENOMIC DNA]</scope>
    <source>
        <strain>668</strain>
    </source>
</reference>
<protein>
    <recommendedName>
        <fullName evidence="1">NADH-quinone oxidoreductase subunit I</fullName>
        <ecNumber evidence="1">7.1.1.-</ecNumber>
    </recommendedName>
    <alternativeName>
        <fullName evidence="1">NADH dehydrogenase I subunit I</fullName>
    </alternativeName>
    <alternativeName>
        <fullName evidence="1">NDH-1 subunit I</fullName>
    </alternativeName>
</protein>
<name>NUOI_BURP6</name>
<comment type="function">
    <text evidence="1">NDH-1 shuttles electrons from NADH, via FMN and iron-sulfur (Fe-S) centers, to quinones in the respiratory chain. The immediate electron acceptor for the enzyme in this species is believed to be ubiquinone. Couples the redox reaction to proton translocation (for every two electrons transferred, four hydrogen ions are translocated across the cytoplasmic membrane), and thus conserves the redox energy in a proton gradient.</text>
</comment>
<comment type="catalytic activity">
    <reaction evidence="1">
        <text>a quinone + NADH + 5 H(+)(in) = a quinol + NAD(+) + 4 H(+)(out)</text>
        <dbReference type="Rhea" id="RHEA:57888"/>
        <dbReference type="ChEBI" id="CHEBI:15378"/>
        <dbReference type="ChEBI" id="CHEBI:24646"/>
        <dbReference type="ChEBI" id="CHEBI:57540"/>
        <dbReference type="ChEBI" id="CHEBI:57945"/>
        <dbReference type="ChEBI" id="CHEBI:132124"/>
    </reaction>
</comment>
<comment type="cofactor">
    <cofactor evidence="1">
        <name>[4Fe-4S] cluster</name>
        <dbReference type="ChEBI" id="CHEBI:49883"/>
    </cofactor>
    <text evidence="1">Binds 2 [4Fe-4S] clusters per subunit.</text>
</comment>
<comment type="subunit">
    <text evidence="1">NDH-1 is composed of 14 different subunits. Subunits NuoA, H, J, K, L, M, N constitute the membrane sector of the complex.</text>
</comment>
<comment type="subcellular location">
    <subcellularLocation>
        <location evidence="1">Cell inner membrane</location>
        <topology evidence="1">Peripheral membrane protein</topology>
    </subcellularLocation>
</comment>
<comment type="similarity">
    <text evidence="1">Belongs to the complex I 23 kDa subunit family.</text>
</comment>
<feature type="chain" id="PRO_1000067765" description="NADH-quinone oxidoreductase subunit I">
    <location>
        <begin position="1"/>
        <end position="162"/>
    </location>
</feature>
<feature type="domain" description="4Fe-4S ferredoxin-type 1" evidence="1">
    <location>
        <begin position="54"/>
        <end position="83"/>
    </location>
</feature>
<feature type="domain" description="4Fe-4S ferredoxin-type 2" evidence="1">
    <location>
        <begin position="93"/>
        <end position="122"/>
    </location>
</feature>
<feature type="binding site" evidence="1">
    <location>
        <position position="63"/>
    </location>
    <ligand>
        <name>[4Fe-4S] cluster</name>
        <dbReference type="ChEBI" id="CHEBI:49883"/>
        <label>1</label>
    </ligand>
</feature>
<feature type="binding site" evidence="1">
    <location>
        <position position="66"/>
    </location>
    <ligand>
        <name>[4Fe-4S] cluster</name>
        <dbReference type="ChEBI" id="CHEBI:49883"/>
        <label>1</label>
    </ligand>
</feature>
<feature type="binding site" evidence="1">
    <location>
        <position position="69"/>
    </location>
    <ligand>
        <name>[4Fe-4S] cluster</name>
        <dbReference type="ChEBI" id="CHEBI:49883"/>
        <label>1</label>
    </ligand>
</feature>
<feature type="binding site" evidence="1">
    <location>
        <position position="73"/>
    </location>
    <ligand>
        <name>[4Fe-4S] cluster</name>
        <dbReference type="ChEBI" id="CHEBI:49883"/>
        <label>2</label>
    </ligand>
</feature>
<feature type="binding site" evidence="1">
    <location>
        <position position="102"/>
    </location>
    <ligand>
        <name>[4Fe-4S] cluster</name>
        <dbReference type="ChEBI" id="CHEBI:49883"/>
        <label>2</label>
    </ligand>
</feature>
<feature type="binding site" evidence="1">
    <location>
        <position position="105"/>
    </location>
    <ligand>
        <name>[4Fe-4S] cluster</name>
        <dbReference type="ChEBI" id="CHEBI:49883"/>
        <label>2</label>
    </ligand>
</feature>
<feature type="binding site" evidence="1">
    <location>
        <position position="108"/>
    </location>
    <ligand>
        <name>[4Fe-4S] cluster</name>
        <dbReference type="ChEBI" id="CHEBI:49883"/>
        <label>2</label>
    </ligand>
</feature>
<feature type="binding site" evidence="1">
    <location>
        <position position="112"/>
    </location>
    <ligand>
        <name>[4Fe-4S] cluster</name>
        <dbReference type="ChEBI" id="CHEBI:49883"/>
        <label>1</label>
    </ligand>
</feature>
<evidence type="ECO:0000255" key="1">
    <source>
        <dbReference type="HAMAP-Rule" id="MF_01351"/>
    </source>
</evidence>
<sequence>MTAIQQFFKTFFLTELLKGLALTGRYTFKRKFTVQFPEEKTPISPRFRGLHALRRYENGEERCIACKLCEAVCPALAITIESETRADNTRRTTRYDIDLTKCIFCGFCEESCPVDSIVETQILEYHGEKRGDLYFTKDMLLAVGDRYEKEVAAAKAADARYR</sequence>
<organism>
    <name type="scientific">Burkholderia pseudomallei (strain 668)</name>
    <dbReference type="NCBI Taxonomy" id="320373"/>
    <lineage>
        <taxon>Bacteria</taxon>
        <taxon>Pseudomonadati</taxon>
        <taxon>Pseudomonadota</taxon>
        <taxon>Betaproteobacteria</taxon>
        <taxon>Burkholderiales</taxon>
        <taxon>Burkholderiaceae</taxon>
        <taxon>Burkholderia</taxon>
        <taxon>pseudomallei group</taxon>
    </lineage>
</organism>
<accession>A3N7M5</accession>
<keyword id="KW-0004">4Fe-4S</keyword>
<keyword id="KW-0997">Cell inner membrane</keyword>
<keyword id="KW-1003">Cell membrane</keyword>
<keyword id="KW-0408">Iron</keyword>
<keyword id="KW-0411">Iron-sulfur</keyword>
<keyword id="KW-0472">Membrane</keyword>
<keyword id="KW-0479">Metal-binding</keyword>
<keyword id="KW-0520">NAD</keyword>
<keyword id="KW-0874">Quinone</keyword>
<keyword id="KW-0677">Repeat</keyword>
<keyword id="KW-1278">Translocase</keyword>
<keyword id="KW-0830">Ubiquinone</keyword>
<dbReference type="EC" id="7.1.1.-" evidence="1"/>
<dbReference type="EMBL" id="CP000570">
    <property type="protein sequence ID" value="ABN82380.1"/>
    <property type="molecule type" value="Genomic_DNA"/>
</dbReference>
<dbReference type="RefSeq" id="WP_011851326.1">
    <property type="nucleotide sequence ID" value="NC_009074.1"/>
</dbReference>
<dbReference type="SMR" id="A3N7M5"/>
<dbReference type="KEGG" id="bpd:BURPS668_1298"/>
<dbReference type="HOGENOM" id="CLU_067218_5_1_4"/>
<dbReference type="GO" id="GO:0005886">
    <property type="term" value="C:plasma membrane"/>
    <property type="evidence" value="ECO:0007669"/>
    <property type="project" value="UniProtKB-SubCell"/>
</dbReference>
<dbReference type="GO" id="GO:0051539">
    <property type="term" value="F:4 iron, 4 sulfur cluster binding"/>
    <property type="evidence" value="ECO:0007669"/>
    <property type="project" value="UniProtKB-KW"/>
</dbReference>
<dbReference type="GO" id="GO:0005506">
    <property type="term" value="F:iron ion binding"/>
    <property type="evidence" value="ECO:0007669"/>
    <property type="project" value="UniProtKB-UniRule"/>
</dbReference>
<dbReference type="GO" id="GO:0050136">
    <property type="term" value="F:NADH:ubiquinone reductase (non-electrogenic) activity"/>
    <property type="evidence" value="ECO:0007669"/>
    <property type="project" value="UniProtKB-UniRule"/>
</dbReference>
<dbReference type="GO" id="GO:0048038">
    <property type="term" value="F:quinone binding"/>
    <property type="evidence" value="ECO:0007669"/>
    <property type="project" value="UniProtKB-KW"/>
</dbReference>
<dbReference type="GO" id="GO:0009060">
    <property type="term" value="P:aerobic respiration"/>
    <property type="evidence" value="ECO:0007669"/>
    <property type="project" value="TreeGrafter"/>
</dbReference>
<dbReference type="FunFam" id="3.30.70.3270:FF:000003">
    <property type="entry name" value="NADH-quinone oxidoreductase subunit I"/>
    <property type="match status" value="1"/>
</dbReference>
<dbReference type="Gene3D" id="3.30.70.3270">
    <property type="match status" value="1"/>
</dbReference>
<dbReference type="HAMAP" id="MF_01351">
    <property type="entry name" value="NDH1_NuoI"/>
    <property type="match status" value="1"/>
</dbReference>
<dbReference type="InterPro" id="IPR017896">
    <property type="entry name" value="4Fe4S_Fe-S-bd"/>
</dbReference>
<dbReference type="InterPro" id="IPR017900">
    <property type="entry name" value="4Fe4S_Fe_S_CS"/>
</dbReference>
<dbReference type="InterPro" id="IPR010226">
    <property type="entry name" value="NADH_quinone_OxRdtase_chainI"/>
</dbReference>
<dbReference type="NCBIfam" id="TIGR01971">
    <property type="entry name" value="NuoI"/>
    <property type="match status" value="1"/>
</dbReference>
<dbReference type="NCBIfam" id="NF004538">
    <property type="entry name" value="PRK05888.1-4"/>
    <property type="match status" value="1"/>
</dbReference>
<dbReference type="NCBIfam" id="NF004539">
    <property type="entry name" value="PRK05888.1-5"/>
    <property type="match status" value="1"/>
</dbReference>
<dbReference type="PANTHER" id="PTHR10849:SF20">
    <property type="entry name" value="NADH DEHYDROGENASE [UBIQUINONE] IRON-SULFUR PROTEIN 8, MITOCHONDRIAL"/>
    <property type="match status" value="1"/>
</dbReference>
<dbReference type="PANTHER" id="PTHR10849">
    <property type="entry name" value="NADH DEHYDROGENASE UBIQUINONE IRON-SULFUR PROTEIN 8, MITOCHONDRIAL"/>
    <property type="match status" value="1"/>
</dbReference>
<dbReference type="Pfam" id="PF12838">
    <property type="entry name" value="Fer4_7"/>
    <property type="match status" value="1"/>
</dbReference>
<dbReference type="SUPFAM" id="SSF54862">
    <property type="entry name" value="4Fe-4S ferredoxins"/>
    <property type="match status" value="1"/>
</dbReference>
<dbReference type="PROSITE" id="PS00198">
    <property type="entry name" value="4FE4S_FER_1"/>
    <property type="match status" value="2"/>
</dbReference>
<dbReference type="PROSITE" id="PS51379">
    <property type="entry name" value="4FE4S_FER_2"/>
    <property type="match status" value="2"/>
</dbReference>
<gene>
    <name evidence="1" type="primary">nuoI</name>
    <name type="ordered locus">BURPS668_1298</name>
</gene>